<sequence length="138" mass="15561">MAEEHQNRLQNAVDSMVKSLERDNIRKMQGKMFRCSAQCCEDNGASMQQVHHCIERCHTPLAQAQSLVTTELERFQNRLSRCTMNCSDQAKDAFDSGSKEAQVKAQLEGCVIKCAEEHMNLIPSMTKKLKDALAQADK</sequence>
<gene>
    <name type="primary">fam136a</name>
</gene>
<proteinExistence type="evidence at transcript level"/>
<comment type="similarity">
    <text evidence="1">Belongs to the FAM136 family.</text>
</comment>
<accession>Q63ZH8</accession>
<protein>
    <recommendedName>
        <fullName>Protein FAM136A</fullName>
    </recommendedName>
</protein>
<organism>
    <name type="scientific">Xenopus laevis</name>
    <name type="common">African clawed frog</name>
    <dbReference type="NCBI Taxonomy" id="8355"/>
    <lineage>
        <taxon>Eukaryota</taxon>
        <taxon>Metazoa</taxon>
        <taxon>Chordata</taxon>
        <taxon>Craniata</taxon>
        <taxon>Vertebrata</taxon>
        <taxon>Euteleostomi</taxon>
        <taxon>Amphibia</taxon>
        <taxon>Batrachia</taxon>
        <taxon>Anura</taxon>
        <taxon>Pipoidea</taxon>
        <taxon>Pipidae</taxon>
        <taxon>Xenopodinae</taxon>
        <taxon>Xenopus</taxon>
        <taxon>Xenopus</taxon>
    </lineage>
</organism>
<name>F136A_XENLA</name>
<keyword id="KW-1185">Reference proteome</keyword>
<reference key="1">
    <citation type="submission" date="2004-09" db="EMBL/GenBank/DDBJ databases">
        <authorList>
            <consortium name="NIH - Xenopus Gene Collection (XGC) project"/>
        </authorList>
    </citation>
    <scope>NUCLEOTIDE SEQUENCE [LARGE SCALE MRNA]</scope>
    <source>
        <tissue>Eye</tissue>
    </source>
</reference>
<feature type="chain" id="PRO_0000296953" description="Protein FAM136A">
    <location>
        <begin position="1"/>
        <end position="138"/>
    </location>
</feature>
<evidence type="ECO:0000305" key="1"/>
<dbReference type="EMBL" id="BC082939">
    <property type="protein sequence ID" value="AAH82939.1"/>
    <property type="molecule type" value="mRNA"/>
</dbReference>
<dbReference type="RefSeq" id="NP_001088123.1">
    <property type="nucleotide sequence ID" value="NM_001094654.1"/>
</dbReference>
<dbReference type="SMR" id="Q63ZH8"/>
<dbReference type="DNASU" id="494828"/>
<dbReference type="GeneID" id="494828"/>
<dbReference type="KEGG" id="xla:494828"/>
<dbReference type="AGR" id="Xenbase:XB-GENE-6255075"/>
<dbReference type="CTD" id="494828"/>
<dbReference type="Xenbase" id="XB-GENE-6255075">
    <property type="gene designation" value="fam136a.S"/>
</dbReference>
<dbReference type="OMA" id="EMEGCVV"/>
<dbReference type="OrthoDB" id="9975421at2759"/>
<dbReference type="Proteomes" id="UP000186698">
    <property type="component" value="Chromosome 3S"/>
</dbReference>
<dbReference type="Bgee" id="494828">
    <property type="expression patterns" value="Expressed in neurula embryo and 19 other cell types or tissues"/>
</dbReference>
<dbReference type="GO" id="GO:0005737">
    <property type="term" value="C:cytoplasm"/>
    <property type="evidence" value="ECO:0000318"/>
    <property type="project" value="GO_Central"/>
</dbReference>
<dbReference type="InterPro" id="IPR008560">
    <property type="entry name" value="DUF842_euk"/>
</dbReference>
<dbReference type="PANTHER" id="PTHR21096">
    <property type="entry name" value="PROTEIN FAM136A"/>
    <property type="match status" value="1"/>
</dbReference>
<dbReference type="PANTHER" id="PTHR21096:SF0">
    <property type="entry name" value="PROTEIN FAM136A"/>
    <property type="match status" value="1"/>
</dbReference>
<dbReference type="Pfam" id="PF05811">
    <property type="entry name" value="DUF842"/>
    <property type="match status" value="1"/>
</dbReference>